<protein>
    <recommendedName>
        <fullName>cAMP-dependent protein kinase type I-beta regulatory subunit</fullName>
    </recommendedName>
</protein>
<gene>
    <name type="primary">Prkar1b</name>
</gene>
<feature type="chain" id="PRO_0000205382" description="cAMP-dependent protein kinase type I-beta regulatory subunit">
    <location>
        <begin position="1"/>
        <end position="381"/>
    </location>
</feature>
<feature type="region of interest" description="Dimerization and phosphorylation">
    <location>
        <begin position="1"/>
        <end position="136"/>
    </location>
</feature>
<feature type="region of interest" description="Disordered" evidence="3">
    <location>
        <begin position="66"/>
        <end position="88"/>
    </location>
</feature>
<feature type="short sequence motif" description="Pseudophosphorylation motif">
    <location>
        <begin position="96"/>
        <end position="100"/>
    </location>
</feature>
<feature type="binding site">
    <location>
        <begin position="137"/>
        <end position="254"/>
    </location>
    <ligand>
        <name>3',5'-cyclic AMP</name>
        <dbReference type="ChEBI" id="CHEBI:58165"/>
        <label>1</label>
    </ligand>
</feature>
<feature type="binding site">
    <location>
        <position position="202"/>
    </location>
    <ligand>
        <name>3',5'-cyclic AMP</name>
        <dbReference type="ChEBI" id="CHEBI:58165"/>
        <label>1</label>
    </ligand>
</feature>
<feature type="binding site">
    <location>
        <position position="211"/>
    </location>
    <ligand>
        <name>3',5'-cyclic AMP</name>
        <dbReference type="ChEBI" id="CHEBI:58165"/>
        <label>1</label>
    </ligand>
</feature>
<feature type="binding site">
    <location>
        <begin position="255"/>
        <end position="381"/>
    </location>
    <ligand>
        <name>3',5'-cyclic AMP</name>
        <dbReference type="ChEBI" id="CHEBI:58165"/>
        <label>2</label>
    </ligand>
</feature>
<feature type="binding site">
    <location>
        <position position="326"/>
    </location>
    <ligand>
        <name>3',5'-cyclic AMP</name>
        <dbReference type="ChEBI" id="CHEBI:58165"/>
        <label>2</label>
    </ligand>
</feature>
<feature type="binding site">
    <location>
        <position position="335"/>
    </location>
    <ligand>
        <name>3',5'-cyclic AMP</name>
        <dbReference type="ChEBI" id="CHEBI:58165"/>
        <label>2</label>
    </ligand>
</feature>
<feature type="modified residue" description="Phosphoserine" evidence="2">
    <location>
        <position position="3"/>
    </location>
</feature>
<feature type="modified residue" description="3'-nitrotyrosine" evidence="2">
    <location>
        <position position="21"/>
    </location>
</feature>
<feature type="modified residue" description="Phosphoserine" evidence="5">
    <location>
        <position position="77"/>
    </location>
</feature>
<feature type="modified residue" description="Phosphoserine" evidence="5">
    <location>
        <position position="83"/>
    </location>
</feature>
<feature type="modified residue" description="Phosphothreonine" evidence="5">
    <location>
        <position position="85"/>
    </location>
</feature>
<feature type="modified residue" description="Omega-N-methylarginine" evidence="6">
    <location>
        <position position="97"/>
    </location>
</feature>
<feature type="disulfide bond" description="Interchain (with C-39)" evidence="1">
    <location>
        <position position="18"/>
    </location>
</feature>
<feature type="disulfide bond" description="Interchain (with C-18)" evidence="1">
    <location>
        <position position="39"/>
    </location>
</feature>
<name>KAP1_MOUSE</name>
<proteinExistence type="evidence at protein level"/>
<keyword id="KW-0114">cAMP</keyword>
<keyword id="KW-0116">cAMP-binding</keyword>
<keyword id="KW-1003">Cell membrane</keyword>
<keyword id="KW-1015">Disulfide bond</keyword>
<keyword id="KW-0472">Membrane</keyword>
<keyword id="KW-0488">Methylation</keyword>
<keyword id="KW-0944">Nitration</keyword>
<keyword id="KW-0547">Nucleotide-binding</keyword>
<keyword id="KW-0597">Phosphoprotein</keyword>
<keyword id="KW-1185">Reference proteome</keyword>
<keyword id="KW-0677">Repeat</keyword>
<organism>
    <name type="scientific">Mus musculus</name>
    <name type="common">Mouse</name>
    <dbReference type="NCBI Taxonomy" id="10090"/>
    <lineage>
        <taxon>Eukaryota</taxon>
        <taxon>Metazoa</taxon>
        <taxon>Chordata</taxon>
        <taxon>Craniata</taxon>
        <taxon>Vertebrata</taxon>
        <taxon>Euteleostomi</taxon>
        <taxon>Mammalia</taxon>
        <taxon>Eutheria</taxon>
        <taxon>Euarchontoglires</taxon>
        <taxon>Glires</taxon>
        <taxon>Rodentia</taxon>
        <taxon>Myomorpha</taxon>
        <taxon>Muroidea</taxon>
        <taxon>Muridae</taxon>
        <taxon>Murinae</taxon>
        <taxon>Mus</taxon>
        <taxon>Mus</taxon>
    </lineage>
</organism>
<sequence>MASPSCFHSEDEDSLKGCEMYVQKHGIQQVLKECIVHLCVAKPDRPLRFLREHFEKLEKEENRQILARQKSNSQCDSHDEEISPTPPNPVVKARRRRGGVSAEVYTEEDAVSYVRKVIPKDYKTMTALAKAISKNVLFSHLDDNERSDIFDAMFPVTHIGGETVIQQGNEGDNFYVIDQGEVDVYVNGEWVTNISEGGSFGELALIYGTPRAATVKAKTDLKLWGIDRDSYRRILMGSTLRKRKMYEEFLSKVSILESLEKWERLTVADALEPVQFEDGEKIVVQGEPGDDFYIITEGTASVLQRRSPNEEYVEVGRLGPSDYFGEIALLLNRPRAATVVARGPLKCVKLDRPRFERVLGPCSEILKRNIQRYNSFISLTV</sequence>
<evidence type="ECO:0000250" key="1"/>
<evidence type="ECO:0000250" key="2">
    <source>
        <dbReference type="UniProtKB" id="P31321"/>
    </source>
</evidence>
<evidence type="ECO:0000256" key="3">
    <source>
        <dbReference type="SAM" id="MobiDB-lite"/>
    </source>
</evidence>
<evidence type="ECO:0000305" key="4"/>
<evidence type="ECO:0007744" key="5">
    <source>
    </source>
</evidence>
<evidence type="ECO:0007744" key="6">
    <source>
    </source>
</evidence>
<dbReference type="EMBL" id="M20473">
    <property type="protein sequence ID" value="AAA39935.1"/>
    <property type="molecule type" value="mRNA"/>
</dbReference>
<dbReference type="CCDS" id="CCDS19803.1"/>
<dbReference type="PIR" id="A30205">
    <property type="entry name" value="OKMSR1"/>
</dbReference>
<dbReference type="RefSeq" id="NP_001240819.1">
    <property type="nucleotide sequence ID" value="NM_001253890.1"/>
</dbReference>
<dbReference type="RefSeq" id="NP_001346026.1">
    <property type="nucleotide sequence ID" value="NM_001359097.1"/>
</dbReference>
<dbReference type="RefSeq" id="NP_001346027.1">
    <property type="nucleotide sequence ID" value="NM_001359098.1"/>
</dbReference>
<dbReference type="RefSeq" id="NP_001346028.1">
    <property type="nucleotide sequence ID" value="NM_001359099.1"/>
</dbReference>
<dbReference type="RefSeq" id="NP_001346029.1">
    <property type="nucleotide sequence ID" value="NM_001359100.1"/>
</dbReference>
<dbReference type="RefSeq" id="NP_001408231.1">
    <property type="nucleotide sequence ID" value="NM_001421302.1"/>
</dbReference>
<dbReference type="RefSeq" id="NP_032949.3">
    <property type="nucleotide sequence ID" value="NM_008923.3"/>
</dbReference>
<dbReference type="RefSeq" id="XP_006504723.1">
    <property type="nucleotide sequence ID" value="XM_006504660.4"/>
</dbReference>
<dbReference type="RefSeq" id="XP_006504724.1">
    <property type="nucleotide sequence ID" value="XM_006504661.3"/>
</dbReference>
<dbReference type="RefSeq" id="XP_006504726.1">
    <property type="nucleotide sequence ID" value="XM_006504663.2"/>
</dbReference>
<dbReference type="RefSeq" id="XP_017176208.1">
    <property type="nucleotide sequence ID" value="XM_017320719.1"/>
</dbReference>
<dbReference type="SMR" id="P12849"/>
<dbReference type="BioGRID" id="202366">
    <property type="interactions" value="93"/>
</dbReference>
<dbReference type="CORUM" id="P12849"/>
<dbReference type="FunCoup" id="P12849">
    <property type="interactions" value="500"/>
</dbReference>
<dbReference type="IntAct" id="P12849">
    <property type="interactions" value="6"/>
</dbReference>
<dbReference type="MINT" id="P12849"/>
<dbReference type="STRING" id="10090.ENSMUSP00000026973"/>
<dbReference type="GlyGen" id="P12849">
    <property type="glycosylation" value="1 site"/>
</dbReference>
<dbReference type="iPTMnet" id="P12849"/>
<dbReference type="PhosphoSitePlus" id="P12849"/>
<dbReference type="jPOST" id="P12849"/>
<dbReference type="PaxDb" id="10090-ENSMUSP00000026973"/>
<dbReference type="PeptideAtlas" id="P12849"/>
<dbReference type="ProteomicsDB" id="301729"/>
<dbReference type="Pumba" id="P12849"/>
<dbReference type="Antibodypedia" id="10769">
    <property type="antibodies" value="363 antibodies from 32 providers"/>
</dbReference>
<dbReference type="DNASU" id="19085"/>
<dbReference type="Ensembl" id="ENSMUST00000026973.14">
    <property type="protein sequence ID" value="ENSMUSP00000026973.8"/>
    <property type="gene ID" value="ENSMUSG00000025855.14"/>
</dbReference>
<dbReference type="Ensembl" id="ENSMUST00000110890.8">
    <property type="protein sequence ID" value="ENSMUSP00000106515.2"/>
    <property type="gene ID" value="ENSMUSG00000025855.14"/>
</dbReference>
<dbReference type="GeneID" id="19085"/>
<dbReference type="KEGG" id="mmu:19085"/>
<dbReference type="UCSC" id="uc009afy.2">
    <property type="organism name" value="mouse"/>
</dbReference>
<dbReference type="AGR" id="MGI:97759"/>
<dbReference type="CTD" id="5575"/>
<dbReference type="MGI" id="MGI:97759">
    <property type="gene designation" value="Prkar1b"/>
</dbReference>
<dbReference type="VEuPathDB" id="HostDB:ENSMUSG00000025855"/>
<dbReference type="eggNOG" id="KOG1113">
    <property type="taxonomic scope" value="Eukaryota"/>
</dbReference>
<dbReference type="GeneTree" id="ENSGT00940000157513"/>
<dbReference type="HOGENOM" id="CLU_018310_1_1_1"/>
<dbReference type="InParanoid" id="P12849"/>
<dbReference type="OMA" id="PHPTIHE"/>
<dbReference type="OrthoDB" id="417078at2759"/>
<dbReference type="PhylomeDB" id="P12849"/>
<dbReference type="TreeFam" id="TF314920"/>
<dbReference type="Reactome" id="R-MMU-163615">
    <property type="pathway name" value="PKA activation"/>
</dbReference>
<dbReference type="Reactome" id="R-MMU-164378">
    <property type="pathway name" value="PKA activation in glucagon signalling"/>
</dbReference>
<dbReference type="Reactome" id="R-MMU-180024">
    <property type="pathway name" value="DARPP-32 events"/>
</dbReference>
<dbReference type="Reactome" id="R-MMU-432040">
    <property type="pathway name" value="Vasopressin regulates renal water homeostasis via Aquaporins"/>
</dbReference>
<dbReference type="Reactome" id="R-MMU-442720">
    <property type="pathway name" value="CREB1 phosphorylation through the activation of Adenylate Cyclase"/>
</dbReference>
<dbReference type="Reactome" id="R-MMU-5610787">
    <property type="pathway name" value="Hedgehog 'off' state"/>
</dbReference>
<dbReference type="Reactome" id="R-MMU-9634597">
    <property type="pathway name" value="GPER1 signaling"/>
</dbReference>
<dbReference type="Reactome" id="R-MMU-983231">
    <property type="pathway name" value="Factors involved in megakaryocyte development and platelet production"/>
</dbReference>
<dbReference type="Reactome" id="R-MMU-9856530">
    <property type="pathway name" value="High laminar flow shear stress activates signaling by PIEZO1 and PECAM1:CDH5:KDR in endothelial cells"/>
</dbReference>
<dbReference type="BioGRID-ORCS" id="19085">
    <property type="hits" value="0 hits in 80 CRISPR screens"/>
</dbReference>
<dbReference type="CD-CODE" id="CE726F99">
    <property type="entry name" value="Postsynaptic density"/>
</dbReference>
<dbReference type="PRO" id="PR:P12849"/>
<dbReference type="Proteomes" id="UP000000589">
    <property type="component" value="Chromosome 5"/>
</dbReference>
<dbReference type="RNAct" id="P12849">
    <property type="molecule type" value="protein"/>
</dbReference>
<dbReference type="Bgee" id="ENSMUSG00000025855">
    <property type="expression patterns" value="Expressed in substantia nigra and 280 other cell types or tissues"/>
</dbReference>
<dbReference type="ExpressionAtlas" id="P12849">
    <property type="expression patterns" value="baseline and differential"/>
</dbReference>
<dbReference type="GO" id="GO:0005952">
    <property type="term" value="C:cAMP-dependent protein kinase complex"/>
    <property type="evidence" value="ECO:0000314"/>
    <property type="project" value="MGI"/>
</dbReference>
<dbReference type="GO" id="GO:0005737">
    <property type="term" value="C:cytoplasm"/>
    <property type="evidence" value="ECO:0000314"/>
    <property type="project" value="MGI"/>
</dbReference>
<dbReference type="GO" id="GO:0098978">
    <property type="term" value="C:glutamatergic synapse"/>
    <property type="evidence" value="ECO:0000314"/>
    <property type="project" value="SynGO"/>
</dbReference>
<dbReference type="GO" id="GO:0098686">
    <property type="term" value="C:hippocampal mossy fiber to CA3 synapse"/>
    <property type="evidence" value="ECO:0000314"/>
    <property type="project" value="SynGO"/>
</dbReference>
<dbReference type="GO" id="GO:0005771">
    <property type="term" value="C:multivesicular body"/>
    <property type="evidence" value="ECO:0000314"/>
    <property type="project" value="MGI"/>
</dbReference>
<dbReference type="GO" id="GO:0005886">
    <property type="term" value="C:plasma membrane"/>
    <property type="evidence" value="ECO:0007669"/>
    <property type="project" value="UniProtKB-SubCell"/>
</dbReference>
<dbReference type="GO" id="GO:0098794">
    <property type="term" value="C:postsynapse"/>
    <property type="evidence" value="ECO:0000314"/>
    <property type="project" value="SynGO"/>
</dbReference>
<dbReference type="GO" id="GO:0098685">
    <property type="term" value="C:Schaffer collateral - CA1 synapse"/>
    <property type="evidence" value="ECO:0000314"/>
    <property type="project" value="SynGO"/>
</dbReference>
<dbReference type="GO" id="GO:0045202">
    <property type="term" value="C:synapse"/>
    <property type="evidence" value="ECO:0000314"/>
    <property type="project" value="SynGO"/>
</dbReference>
<dbReference type="GO" id="GO:0030552">
    <property type="term" value="F:cAMP binding"/>
    <property type="evidence" value="ECO:0007669"/>
    <property type="project" value="UniProtKB-KW"/>
</dbReference>
<dbReference type="GO" id="GO:0004862">
    <property type="term" value="F:cAMP-dependent protein kinase inhibitor activity"/>
    <property type="evidence" value="ECO:0007669"/>
    <property type="project" value="Ensembl"/>
</dbReference>
<dbReference type="GO" id="GO:0008603">
    <property type="term" value="F:cAMP-dependent protein kinase regulator activity"/>
    <property type="evidence" value="ECO:0000250"/>
    <property type="project" value="MGI"/>
</dbReference>
<dbReference type="GO" id="GO:0034236">
    <property type="term" value="F:protein kinase A catalytic subunit binding"/>
    <property type="evidence" value="ECO:0007669"/>
    <property type="project" value="Ensembl"/>
</dbReference>
<dbReference type="GO" id="GO:0009887">
    <property type="term" value="P:animal organ morphogenesis"/>
    <property type="evidence" value="ECO:0000304"/>
    <property type="project" value="MGI"/>
</dbReference>
<dbReference type="GO" id="GO:0007611">
    <property type="term" value="P:learning or memory"/>
    <property type="evidence" value="ECO:0000315"/>
    <property type="project" value="MGI"/>
</dbReference>
<dbReference type="GO" id="GO:0050804">
    <property type="term" value="P:modulation of chemical synaptic transmission"/>
    <property type="evidence" value="ECO:0000314"/>
    <property type="project" value="SynGO"/>
</dbReference>
<dbReference type="GO" id="GO:0141162">
    <property type="term" value="P:negative regulation of cAMP/PKA signal transduction"/>
    <property type="evidence" value="ECO:0007669"/>
    <property type="project" value="Ensembl"/>
</dbReference>
<dbReference type="GO" id="GO:2000463">
    <property type="term" value="P:positive regulation of excitatory postsynaptic potential"/>
    <property type="evidence" value="ECO:0007669"/>
    <property type="project" value="Ensembl"/>
</dbReference>
<dbReference type="GO" id="GO:1903367">
    <property type="term" value="P:positive regulation of fear response"/>
    <property type="evidence" value="ECO:0007669"/>
    <property type="project" value="Ensembl"/>
</dbReference>
<dbReference type="GO" id="GO:1900273">
    <property type="term" value="P:positive regulation of long-term synaptic potentiation"/>
    <property type="evidence" value="ECO:0007669"/>
    <property type="project" value="Ensembl"/>
</dbReference>
<dbReference type="GO" id="GO:0098693">
    <property type="term" value="P:regulation of synaptic vesicle cycle"/>
    <property type="evidence" value="ECO:0000314"/>
    <property type="project" value="SynGO"/>
</dbReference>
<dbReference type="CDD" id="cd00038">
    <property type="entry name" value="CAP_ED"/>
    <property type="match status" value="2"/>
</dbReference>
<dbReference type="CDD" id="cd12102">
    <property type="entry name" value="DD_RIbeta_PKA"/>
    <property type="match status" value="1"/>
</dbReference>
<dbReference type="FunFam" id="2.60.120.10:FF:000013">
    <property type="entry name" value="cAMP-dependent protein kinase type I regulatory subunit"/>
    <property type="match status" value="1"/>
</dbReference>
<dbReference type="FunFam" id="1.20.890.10:FF:000001">
    <property type="entry name" value="cAMP-dependent protein kinase type I-alpha regulatory subunit"/>
    <property type="match status" value="1"/>
</dbReference>
<dbReference type="FunFam" id="2.60.120.10:FF:000006">
    <property type="entry name" value="cAMP-dependent protein kinase type I-alpha regulatory subunit"/>
    <property type="match status" value="1"/>
</dbReference>
<dbReference type="Gene3D" id="1.20.890.10">
    <property type="entry name" value="cAMP-dependent protein kinase regulatory subunit, dimerization-anchoring domain"/>
    <property type="match status" value="1"/>
</dbReference>
<dbReference type="Gene3D" id="2.60.120.10">
    <property type="entry name" value="Jelly Rolls"/>
    <property type="match status" value="2"/>
</dbReference>
<dbReference type="InterPro" id="IPR050503">
    <property type="entry name" value="cAMP-dep_PK_reg_su-like"/>
</dbReference>
<dbReference type="InterPro" id="IPR012198">
    <property type="entry name" value="cAMP_dep_PK_reg_su"/>
</dbReference>
<dbReference type="InterPro" id="IPR003117">
    <property type="entry name" value="cAMP_dep_PK_reg_su_I/II_a/b"/>
</dbReference>
<dbReference type="InterPro" id="IPR018488">
    <property type="entry name" value="cNMP-bd_CS"/>
</dbReference>
<dbReference type="InterPro" id="IPR000595">
    <property type="entry name" value="cNMP-bd_dom"/>
</dbReference>
<dbReference type="InterPro" id="IPR018490">
    <property type="entry name" value="cNMP-bd_dom_sf"/>
</dbReference>
<dbReference type="InterPro" id="IPR042818">
    <property type="entry name" value="RIbeta_DD"/>
</dbReference>
<dbReference type="InterPro" id="IPR014710">
    <property type="entry name" value="RmlC-like_jellyroll"/>
</dbReference>
<dbReference type="PANTHER" id="PTHR11635">
    <property type="entry name" value="CAMP-DEPENDENT PROTEIN KINASE REGULATORY CHAIN"/>
    <property type="match status" value="1"/>
</dbReference>
<dbReference type="PANTHER" id="PTHR11635:SF126">
    <property type="entry name" value="CAMP-DEPENDENT PROTEIN KINASE TYPE I-BETA REGULATORY SUBUNIT"/>
    <property type="match status" value="1"/>
</dbReference>
<dbReference type="Pfam" id="PF00027">
    <property type="entry name" value="cNMP_binding"/>
    <property type="match status" value="2"/>
</dbReference>
<dbReference type="Pfam" id="PF02197">
    <property type="entry name" value="RIIa"/>
    <property type="match status" value="1"/>
</dbReference>
<dbReference type="PIRSF" id="PIRSF000548">
    <property type="entry name" value="PK_regulatory"/>
    <property type="match status" value="1"/>
</dbReference>
<dbReference type="PRINTS" id="PR00103">
    <property type="entry name" value="CAMPKINASE"/>
</dbReference>
<dbReference type="SMART" id="SM00100">
    <property type="entry name" value="cNMP"/>
    <property type="match status" value="2"/>
</dbReference>
<dbReference type="SMART" id="SM00394">
    <property type="entry name" value="RIIa"/>
    <property type="match status" value="1"/>
</dbReference>
<dbReference type="SUPFAM" id="SSF51206">
    <property type="entry name" value="cAMP-binding domain-like"/>
    <property type="match status" value="2"/>
</dbReference>
<dbReference type="SUPFAM" id="SSF47391">
    <property type="entry name" value="Dimerization-anchoring domain of cAMP-dependent PK regulatory subunit"/>
    <property type="match status" value="1"/>
</dbReference>
<dbReference type="PROSITE" id="PS00888">
    <property type="entry name" value="CNMP_BINDING_1"/>
    <property type="match status" value="2"/>
</dbReference>
<dbReference type="PROSITE" id="PS00889">
    <property type="entry name" value="CNMP_BINDING_2"/>
    <property type="match status" value="2"/>
</dbReference>
<dbReference type="PROSITE" id="PS50042">
    <property type="entry name" value="CNMP_BINDING_3"/>
    <property type="match status" value="2"/>
</dbReference>
<reference key="1">
    <citation type="journal article" date="1988" name="Proc. Natl. Acad. Sci. U.S.A.">
        <title>Genetic characterization of a brain-specific form of the type I regulatory subunit of cAMP-dependent protein kinase.</title>
        <authorList>
            <person name="Clegg C.H."/>
            <person name="Cadd G.G."/>
            <person name="McKnight G.S."/>
        </authorList>
    </citation>
    <scope>NUCLEOTIDE SEQUENCE [MRNA]</scope>
    <source>
        <tissue>Brain</tissue>
    </source>
</reference>
<reference key="2">
    <citation type="journal article" date="2010" name="Cell">
        <title>A tissue-specific atlas of mouse protein phosphorylation and expression.</title>
        <authorList>
            <person name="Huttlin E.L."/>
            <person name="Jedrychowski M.P."/>
            <person name="Elias J.E."/>
            <person name="Goswami T."/>
            <person name="Rad R."/>
            <person name="Beausoleil S.A."/>
            <person name="Villen J."/>
            <person name="Haas W."/>
            <person name="Sowa M.E."/>
            <person name="Gygi S.P."/>
        </authorList>
    </citation>
    <scope>PHOSPHORYLATION [LARGE SCALE ANALYSIS] AT SER-77; SER-83 AND THR-85</scope>
    <scope>IDENTIFICATION BY MASS SPECTROMETRY [LARGE SCALE ANALYSIS]</scope>
    <source>
        <tissue>Brain</tissue>
        <tissue>Kidney</tissue>
        <tissue>Lung</tissue>
    </source>
</reference>
<reference key="3">
    <citation type="journal article" date="2014" name="Mol. Cell. Proteomics">
        <title>Immunoaffinity enrichment and mass spectrometry analysis of protein methylation.</title>
        <authorList>
            <person name="Guo A."/>
            <person name="Gu H."/>
            <person name="Zhou J."/>
            <person name="Mulhern D."/>
            <person name="Wang Y."/>
            <person name="Lee K.A."/>
            <person name="Yang V."/>
            <person name="Aguiar M."/>
            <person name="Kornhauser J."/>
            <person name="Jia X."/>
            <person name="Ren J."/>
            <person name="Beausoleil S.A."/>
            <person name="Silva J.C."/>
            <person name="Vemulapalli V."/>
            <person name="Bedford M.T."/>
            <person name="Comb M.J."/>
        </authorList>
    </citation>
    <scope>METHYLATION [LARGE SCALE ANALYSIS] AT ARG-97</scope>
    <scope>IDENTIFICATION BY MASS SPECTROMETRY [LARGE SCALE ANALYSIS]</scope>
    <source>
        <tissue>Brain</tissue>
    </source>
</reference>
<comment type="function">
    <text evidence="1">Regulatory subunit of the cAMP-dependent protein kinases involved in cAMP signaling in cells.</text>
</comment>
<comment type="subunit">
    <text evidence="1">The inactive holoenzyme is composed of two regulatory chains and two catalytic chains. Activation by cAMP releases the two active catalytic monomers and the regulatory dimer. Interacts with PRKX; regulates this cAMP-dependent protein kinase (By similarity). Interacts with smAKAP; this interaction may target PRKAR1B to the plasma membrane (By similarity).</text>
</comment>
<comment type="subcellular location">
    <subcellularLocation>
        <location evidence="1">Cell membrane</location>
    </subcellularLocation>
</comment>
<comment type="tissue specificity">
    <text>Four types of regulatory chains are found: I-alpha, I-beta, II-alpha, and II-beta. Their expression varies among tissues and is in some cases constitutive and in others inducible.</text>
</comment>
<comment type="PTM">
    <text>The pseudophosphorylation site binds to the substrate-binding region of the catalytic chain, resulting in the inhibition of its activity.</text>
</comment>
<comment type="similarity">
    <text evidence="4">Belongs to the cAMP-dependent kinase regulatory chain family.</text>
</comment>
<accession>P12849</accession>